<organismHost>
    <name type="scientific">Miniopterus schreibersii</name>
    <name type="common">Schreibers's long-fingered bat</name>
    <name type="synonym">Vespertilio schreibersii</name>
    <dbReference type="NCBI Taxonomy" id="9433"/>
</organismHost>
<sequence>MDSEHIVFRVRNEIVTLKPEVISDQYEYKYPAITDKKKPSITLGRAPDLSIAYRSILSGFNAAKLDPDDVCSYLAAAMPLFEGVCPEDWISYGIIIARKGDKINPSHLVDIMRTEVEGNWSQSGGADVTRNPTVAEHASLVGLLLCLYRLSKIVGQNTANYKTNVADRMEQIFETAPFVKIIEHHTLMTTHKMCANWSTIPNFRFLVGTYDMFFSRIDHLYSALRVGTVVTAYEDCTGLVSFTAFLKQINLSARDAILYFFHKNFEEEIRRMFRPNQETAVPHSYFIHFRSLGLSGKSPYSSNAVGHVFNLIHFVGCYMGQVRSLNATVIQTCAPHEMSVLGGYLGEEFFGKGTFERRFFRDERELQDHLEAEEAKIDIALADDATVDSGDEDFYGGESRSPEAVYNRIIMNKGRLKKLHIKRYRSVSSNHQARPNTFAEFLNKVYSDDN</sequence>
<dbReference type="EMBL" id="EF614258">
    <property type="protein sequence ID" value="AAR03481.1"/>
    <property type="molecule type" value="mRNA"/>
</dbReference>
<dbReference type="RefSeq" id="YP_009094268.1">
    <property type="nucleotide sequence ID" value="NC_025377.1"/>
</dbReference>
<dbReference type="SMR" id="Q5VKP2"/>
<dbReference type="GeneID" id="20964563"/>
<dbReference type="KEGG" id="vg:20964563"/>
<dbReference type="OrthoDB" id="22890at10239"/>
<dbReference type="Proteomes" id="UP000095862">
    <property type="component" value="Genome"/>
</dbReference>
<dbReference type="GO" id="GO:0019029">
    <property type="term" value="C:helical viral capsid"/>
    <property type="evidence" value="ECO:0007669"/>
    <property type="project" value="UniProtKB-KW"/>
</dbReference>
<dbReference type="GO" id="GO:0030430">
    <property type="term" value="C:host cell cytoplasm"/>
    <property type="evidence" value="ECO:0007669"/>
    <property type="project" value="UniProtKB-SubCell"/>
</dbReference>
<dbReference type="GO" id="GO:1990904">
    <property type="term" value="C:ribonucleoprotein complex"/>
    <property type="evidence" value="ECO:0007669"/>
    <property type="project" value="UniProtKB-KW"/>
</dbReference>
<dbReference type="GO" id="GO:0019013">
    <property type="term" value="C:viral nucleocapsid"/>
    <property type="evidence" value="ECO:0007669"/>
    <property type="project" value="UniProtKB-KW"/>
</dbReference>
<dbReference type="GO" id="GO:0003723">
    <property type="term" value="F:RNA binding"/>
    <property type="evidence" value="ECO:0007669"/>
    <property type="project" value="UniProtKB-KW"/>
</dbReference>
<dbReference type="Gene3D" id="1.10.3610.10">
    <property type="entry name" value="Nucleoprotein"/>
    <property type="match status" value="1"/>
</dbReference>
<dbReference type="Gene3D" id="1.10.3570.10">
    <property type="entry name" value="Rhabdovirus nucleocapsid protein like domain"/>
    <property type="match status" value="1"/>
</dbReference>
<dbReference type="InterPro" id="IPR000448">
    <property type="entry name" value="Rhabdo_ncapsid"/>
</dbReference>
<dbReference type="InterPro" id="IPR023331">
    <property type="entry name" value="Rhabdovirus_ncapsid_C"/>
</dbReference>
<dbReference type="InterPro" id="IPR023330">
    <property type="entry name" value="Rhabdovirus_ncapsid_N"/>
</dbReference>
<dbReference type="InterPro" id="IPR035961">
    <property type="entry name" value="Rhabdovirus_nucleoprotein-like"/>
</dbReference>
<dbReference type="Pfam" id="PF00945">
    <property type="entry name" value="Rhabdo_ncap"/>
    <property type="match status" value="1"/>
</dbReference>
<dbReference type="SUPFAM" id="SSF140809">
    <property type="entry name" value="Rhabdovirus nucleoprotein-like"/>
    <property type="match status" value="1"/>
</dbReference>
<organism>
    <name type="scientific">West Caucasian bat virus</name>
    <name type="common">WCBV</name>
    <dbReference type="NCBI Taxonomy" id="249584"/>
    <lineage>
        <taxon>Viruses</taxon>
        <taxon>Riboviria</taxon>
        <taxon>Orthornavirae</taxon>
        <taxon>Negarnaviricota</taxon>
        <taxon>Haploviricotina</taxon>
        <taxon>Monjiviricetes</taxon>
        <taxon>Mononegavirales</taxon>
        <taxon>Rhabdoviridae</taxon>
        <taxon>Alpharhabdovirinae</taxon>
        <taxon>Lyssavirus</taxon>
    </lineage>
</organism>
<evidence type="ECO:0000250" key="1"/>
<evidence type="ECO:0000305" key="2"/>
<keyword id="KW-0167">Capsid protein</keyword>
<keyword id="KW-1139">Helical capsid protein</keyword>
<keyword id="KW-1035">Host cytoplasm</keyword>
<keyword id="KW-0597">Phosphoprotein</keyword>
<keyword id="KW-1185">Reference proteome</keyword>
<keyword id="KW-0687">Ribonucleoprotein</keyword>
<keyword id="KW-0694">RNA-binding</keyword>
<keyword id="KW-0766">Superantigen</keyword>
<keyword id="KW-0543">Viral nucleoprotein</keyword>
<keyword id="KW-0946">Virion</keyword>
<name>NCAP_WCBV</name>
<protein>
    <recommendedName>
        <fullName>Nucleoprotein</fullName>
        <shortName>NP</shortName>
    </recommendedName>
    <alternativeName>
        <fullName>Nucleocapsid protein</fullName>
        <shortName>Protein N</shortName>
    </alternativeName>
</protein>
<proteinExistence type="evidence at transcript level"/>
<gene>
    <name type="primary">N</name>
</gene>
<reference key="1">
    <citation type="journal article" date="2005" name="Virus Res.">
        <title>Phylogenetic relationships of Irkut and West Caucasian bat viruses within the Lyssavirus genus and suggested quantitative criteria based on the N gene sequence for lyssavirus genotype definition.</title>
        <authorList>
            <person name="Kuzmin I.V."/>
            <person name="Hughes G.J."/>
            <person name="Botvinkin A.D."/>
            <person name="Orciari L.A."/>
            <person name="Rupprecht C.E."/>
        </authorList>
    </citation>
    <scope>NUCLEOTIDE SEQUENCE [MRNA]</scope>
</reference>
<reference key="2">
    <citation type="journal article" date="2008" name="Virus Res.">
        <title>Complete genomes of Aravan, Khujand, Irkut and West Caucasian bat viruses, with special attention to the polymerase gene and non-coding regions.</title>
        <authorList>
            <person name="Kuzmin I.V."/>
            <person name="Wu X."/>
            <person name="Tordo N."/>
            <person name="Rupprecht C.E."/>
        </authorList>
    </citation>
    <scope>NUCLEOTIDE SEQUENCE [GENOMIC RNA]</scope>
</reference>
<accession>Q5VKP2</accession>
<comment type="function">
    <text evidence="1">Encapsidates the genome in a ratio of one protein N per nine ribonucleotides, protecting it from nucleases. If expressed without protein P it binds non-specifically RNA and therefore can bind it's own mRNA. Interaction with protein P abolishes any non-specific RNA binding, and prevents phosphorylation. The soluble N-P complex encapsidates specifically the genomic RNA, with protein N protecting the genome like a pearl necklace. The encapsidated genomic RNA is termed the nucleocapsid (NC) and serves as template for viral transcription and replication. Protein N binds protein P in the NC through a different interaction, and can be phosphorylated. Subsequent viral replication is dependent on intracellular concentration of newly synthesized protein N. During replication, encapsidation by protein N is coupled to RNA synthesis and all replicative products are resistant to nucleases (By similarity).</text>
</comment>
<comment type="subunit">
    <text evidence="1">Homomultimerizes to form the nucleocapsid. Binds to viral genomic RNA. In nucleocapsid, binds protein P and thereby positions the polymerase on the template. Protein P acts as a chaperone on free protein N to prevent it from aggregation before encapsidating genomic RNA (By similarity).</text>
</comment>
<comment type="subcellular location">
    <subcellularLocation>
        <location>Virion</location>
    </subcellularLocation>
    <subcellularLocation>
        <location evidence="1">Host cytoplasm</location>
    </subcellularLocation>
</comment>
<comment type="PTM">
    <text evidence="1">Phosphorylated by host CK2. Unphosphorylated protein N seems to have a better affinity for leader viral promoter encapsidation. Phosphorylation of protein N in ribonucleocapsid may stabilize the interaction with protein P, thereby playing an important role in viral transcription/replication (By similarity).</text>
</comment>
<comment type="miscellaneous">
    <text evidence="1">Displays a superantigen activity in human and mouse, activating mostly V-beta-8 subtypes of T-cell receptor.</text>
</comment>
<comment type="similarity">
    <text evidence="2">Belongs to the lyssavirus nucleocapsid protein family.</text>
</comment>
<feature type="chain" id="PRO_0000295214" description="Nucleoprotein">
    <location>
        <begin position="1"/>
        <end position="450"/>
    </location>
</feature>
<feature type="modified residue" description="Phosphoserine; by host CK2" evidence="1">
    <location>
        <position position="389"/>
    </location>
</feature>